<proteinExistence type="evidence at protein level"/>
<protein>
    <recommendedName>
        <fullName>Subtilisin-like protease 6</fullName>
        <ecNumber>3.4.21.-</ecNumber>
    </recommendedName>
</protein>
<feature type="signal peptide" evidence="2">
    <location>
        <begin position="1"/>
        <end position="20"/>
    </location>
</feature>
<feature type="propeptide" id="PRO_0000380808" evidence="1">
    <location>
        <begin position="21"/>
        <end position="126"/>
    </location>
</feature>
<feature type="chain" id="PRO_0000380809" description="Subtilisin-like protease 6">
    <location>
        <begin position="127"/>
        <end position="412"/>
    </location>
</feature>
<feature type="domain" description="Inhibitor I9" evidence="2">
    <location>
        <begin position="36"/>
        <end position="120"/>
    </location>
</feature>
<feature type="domain" description="Peptidase S8" evidence="3">
    <location>
        <begin position="135"/>
        <end position="412"/>
    </location>
</feature>
<feature type="active site" description="Charge relay system" evidence="3">
    <location>
        <position position="167"/>
    </location>
</feature>
<feature type="active site" description="Charge relay system" evidence="3">
    <location>
        <position position="198"/>
    </location>
</feature>
<feature type="active site" description="Charge relay system" evidence="3">
    <location>
        <position position="358"/>
    </location>
</feature>
<feature type="glycosylation site" description="N-linked (GlcNAc...) asparagine" evidence="2">
    <location>
        <position position="123"/>
    </location>
</feature>
<feature type="glycosylation site" description="N-linked (GlcNAc...) asparagine" evidence="2">
    <location>
        <position position="126"/>
    </location>
</feature>
<feature type="glycosylation site" description="N-linked (GlcNAc...) asparagine" evidence="2">
    <location>
        <position position="252"/>
    </location>
</feature>
<feature type="glycosylation site" description="N-linked (GlcNAc...) asparagine" evidence="2">
    <location>
        <position position="264"/>
    </location>
</feature>
<feature type="glycosylation site" description="N-linked (GlcNAc...) asparagine" evidence="2">
    <location>
        <position position="408"/>
    </location>
</feature>
<keyword id="KW-0325">Glycoprotein</keyword>
<keyword id="KW-0378">Hydrolase</keyword>
<keyword id="KW-0645">Protease</keyword>
<keyword id="KW-0964">Secreted</keyword>
<keyword id="KW-0720">Serine protease</keyword>
<keyword id="KW-0732">Signal</keyword>
<keyword id="KW-0843">Virulence</keyword>
<keyword id="KW-0865">Zymogen</keyword>
<sequence length="412" mass="42967">MGFITKAIPIVLAALSTVNGAKILEAGPHAETIPNKYIVVMKREVSDEAFSAHTTWLSQNLNRRVMRRSGSSKAMAGMQDKYSLGGIFRAYSGEFDDAMIKDISSHDDVDYIEPDFVVRTSTNGTNLTRQDNVPSWGLARVSSKKAGGTTYYYDSSAGKGVTAYVIDTGIDINHEDFRGRAKWGKNFVDDMDEDCNGHGTHVAGTVGGTKYGLAKGVSLVAVKVLDCEGSGSNSGVIKGMEWAMREASGGGNGTAKAAGKAVMNMSLGGPRSQASNQAAKAISDAGIFMAVAAGNENMDAQHSSPASEPSVCTVAASTEDDGKADFSNYGQLVDVYAPGKDITSLKPGGSTDTLSGTSMASPHVCGLGAYLIGLGKQGGPGLCDTIKEMAHDAIQRPGEGTTSKLIYNGSGK</sequence>
<organism>
    <name type="scientific">Trichophyton equinum</name>
    <name type="common">Horse ringworm fungus</name>
    <dbReference type="NCBI Taxonomy" id="63418"/>
    <lineage>
        <taxon>Eukaryota</taxon>
        <taxon>Fungi</taxon>
        <taxon>Dikarya</taxon>
        <taxon>Ascomycota</taxon>
        <taxon>Pezizomycotina</taxon>
        <taxon>Eurotiomycetes</taxon>
        <taxon>Eurotiomycetidae</taxon>
        <taxon>Onygenales</taxon>
        <taxon>Arthrodermataceae</taxon>
        <taxon>Trichophyton</taxon>
    </lineage>
</organism>
<comment type="function">
    <text evidence="1">Secreted subtilisin-like serine protease with keratinolytic activity that contributes to pathogenicity.</text>
</comment>
<comment type="subcellular location">
    <subcellularLocation>
        <location evidence="4">Secreted</location>
    </subcellularLocation>
</comment>
<comment type="similarity">
    <text evidence="5">Belongs to the peptidase S8 family.</text>
</comment>
<dbReference type="EC" id="3.4.21.-"/>
<dbReference type="EMBL" id="DQ382269">
    <property type="protein sequence ID" value="ABD38555.1"/>
    <property type="molecule type" value="Genomic_DNA"/>
</dbReference>
<dbReference type="EMBL" id="FJ356726">
    <property type="protein sequence ID" value="ACJ04081.1"/>
    <property type="molecule type" value="Genomic_DNA"/>
</dbReference>
<dbReference type="SMR" id="A1XIH0"/>
<dbReference type="GlyCosmos" id="A1XIH0">
    <property type="glycosylation" value="5 sites, No reported glycans"/>
</dbReference>
<dbReference type="VEuPathDB" id="FungiDB:TEQG_02774"/>
<dbReference type="GO" id="GO:0005576">
    <property type="term" value="C:extracellular region"/>
    <property type="evidence" value="ECO:0007669"/>
    <property type="project" value="UniProtKB-SubCell"/>
</dbReference>
<dbReference type="GO" id="GO:0004252">
    <property type="term" value="F:serine-type endopeptidase activity"/>
    <property type="evidence" value="ECO:0007669"/>
    <property type="project" value="InterPro"/>
</dbReference>
<dbReference type="GO" id="GO:0006508">
    <property type="term" value="P:proteolysis"/>
    <property type="evidence" value="ECO:0007669"/>
    <property type="project" value="UniProtKB-KW"/>
</dbReference>
<dbReference type="CDD" id="cd04077">
    <property type="entry name" value="Peptidases_S8_PCSK9_ProteinaseK_like"/>
    <property type="match status" value="1"/>
</dbReference>
<dbReference type="FunFam" id="3.40.50.200:FF:000014">
    <property type="entry name" value="Proteinase K"/>
    <property type="match status" value="1"/>
</dbReference>
<dbReference type="Gene3D" id="3.30.70.80">
    <property type="entry name" value="Peptidase S8 propeptide/proteinase inhibitor I9"/>
    <property type="match status" value="1"/>
</dbReference>
<dbReference type="Gene3D" id="3.40.50.200">
    <property type="entry name" value="Peptidase S8/S53 domain"/>
    <property type="match status" value="1"/>
</dbReference>
<dbReference type="InterPro" id="IPR034193">
    <property type="entry name" value="PCSK9_ProteinaseK-like"/>
</dbReference>
<dbReference type="InterPro" id="IPR000209">
    <property type="entry name" value="Peptidase_S8/S53_dom"/>
</dbReference>
<dbReference type="InterPro" id="IPR036852">
    <property type="entry name" value="Peptidase_S8/S53_dom_sf"/>
</dbReference>
<dbReference type="InterPro" id="IPR023827">
    <property type="entry name" value="Peptidase_S8_Asp-AS"/>
</dbReference>
<dbReference type="InterPro" id="IPR022398">
    <property type="entry name" value="Peptidase_S8_His-AS"/>
</dbReference>
<dbReference type="InterPro" id="IPR023828">
    <property type="entry name" value="Peptidase_S8_Ser-AS"/>
</dbReference>
<dbReference type="InterPro" id="IPR050131">
    <property type="entry name" value="Peptidase_S8_subtilisin-like"/>
</dbReference>
<dbReference type="InterPro" id="IPR015500">
    <property type="entry name" value="Peptidase_S8_subtilisin-rel"/>
</dbReference>
<dbReference type="InterPro" id="IPR010259">
    <property type="entry name" value="S8pro/Inhibitor_I9"/>
</dbReference>
<dbReference type="InterPro" id="IPR037045">
    <property type="entry name" value="S8pro/Inhibitor_I9_sf"/>
</dbReference>
<dbReference type="PANTHER" id="PTHR43806:SF11">
    <property type="entry name" value="CEREVISIN-RELATED"/>
    <property type="match status" value="1"/>
</dbReference>
<dbReference type="PANTHER" id="PTHR43806">
    <property type="entry name" value="PEPTIDASE S8"/>
    <property type="match status" value="1"/>
</dbReference>
<dbReference type="Pfam" id="PF05922">
    <property type="entry name" value="Inhibitor_I9"/>
    <property type="match status" value="1"/>
</dbReference>
<dbReference type="Pfam" id="PF00082">
    <property type="entry name" value="Peptidase_S8"/>
    <property type="match status" value="1"/>
</dbReference>
<dbReference type="PRINTS" id="PR00723">
    <property type="entry name" value="SUBTILISIN"/>
</dbReference>
<dbReference type="SUPFAM" id="SSF54897">
    <property type="entry name" value="Protease propeptides/inhibitors"/>
    <property type="match status" value="1"/>
</dbReference>
<dbReference type="SUPFAM" id="SSF52743">
    <property type="entry name" value="Subtilisin-like"/>
    <property type="match status" value="1"/>
</dbReference>
<dbReference type="PROSITE" id="PS51892">
    <property type="entry name" value="SUBTILASE"/>
    <property type="match status" value="1"/>
</dbReference>
<dbReference type="PROSITE" id="PS00136">
    <property type="entry name" value="SUBTILASE_ASP"/>
    <property type="match status" value="1"/>
</dbReference>
<dbReference type="PROSITE" id="PS00137">
    <property type="entry name" value="SUBTILASE_HIS"/>
    <property type="match status" value="1"/>
</dbReference>
<dbReference type="PROSITE" id="PS00138">
    <property type="entry name" value="SUBTILASE_SER"/>
    <property type="match status" value="1"/>
</dbReference>
<accession>A1XIH0</accession>
<evidence type="ECO:0000250" key="1"/>
<evidence type="ECO:0000255" key="2"/>
<evidence type="ECO:0000255" key="3">
    <source>
        <dbReference type="PROSITE-ProRule" id="PRU01240"/>
    </source>
</evidence>
<evidence type="ECO:0000269" key="4">
    <source>
    </source>
</evidence>
<evidence type="ECO:0000305" key="5"/>
<gene>
    <name type="primary">SUB6</name>
</gene>
<name>SUB6_TRIEQ</name>
<reference key="1">
    <citation type="journal article" date="2007" name="FEMS Microbiol. Lett.">
        <title>Closely related dermatophyte species produce different patterns of secreted proteins.</title>
        <authorList>
            <person name="Giddey K."/>
            <person name="Favre B."/>
            <person name="Quadroni M."/>
            <person name="Monod M."/>
        </authorList>
    </citation>
    <scope>NUCLEOTIDE SEQUENCE [GENOMIC DNA]</scope>
    <scope>IDENTIFICATION BY MASS SPECTROMETRY</scope>
    <scope>SUBCELLULAR LOCATION</scope>
    <source>
        <strain>IHEM 15219</strain>
    </source>
</reference>
<reference key="2">
    <citation type="submission" date="2008-10" db="EMBL/GenBank/DDBJ databases">
        <title>Comparing putative pathogenicity factors between Trichophyton tonsurans and Trichophyton equinum.</title>
        <authorList>
            <person name="Preuett B.L."/>
            <person name="Abdel-Rahman S.M."/>
        </authorList>
    </citation>
    <scope>NUCLEOTIDE SEQUENCE [GENOMIC DNA]</scope>
</reference>